<sequence>MKRIAFVFSTVPHGTAAGREGLDALLATSALTDDLAVFFIADGVFQLLPGQKPDAVLARDYIATFKLLGLYDIEQCWVCAASLRERGLDPQTPFVVEATPLEADALRRELANYDVILRF</sequence>
<dbReference type="EMBL" id="CP000247">
    <property type="protein sequence ID" value="ABG71414.1"/>
    <property type="molecule type" value="Genomic_DNA"/>
</dbReference>
<dbReference type="RefSeq" id="WP_000820734.1">
    <property type="nucleotide sequence ID" value="NC_008253.1"/>
</dbReference>
<dbReference type="SMR" id="Q0TCB5"/>
<dbReference type="KEGG" id="ecp:ECP_3434"/>
<dbReference type="HOGENOM" id="CLU_155943_1_0_6"/>
<dbReference type="Proteomes" id="UP000009182">
    <property type="component" value="Chromosome"/>
</dbReference>
<dbReference type="GO" id="GO:0005737">
    <property type="term" value="C:cytoplasm"/>
    <property type="evidence" value="ECO:0007669"/>
    <property type="project" value="UniProtKB-SubCell"/>
</dbReference>
<dbReference type="GO" id="GO:0008033">
    <property type="term" value="P:tRNA processing"/>
    <property type="evidence" value="ECO:0007669"/>
    <property type="project" value="UniProtKB-UniRule"/>
</dbReference>
<dbReference type="FunFam" id="3.40.1260.10:FF:000004">
    <property type="entry name" value="Sulfurtransferase TusC"/>
    <property type="match status" value="1"/>
</dbReference>
<dbReference type="Gene3D" id="3.40.1260.10">
    <property type="entry name" value="DsrEFH-like"/>
    <property type="match status" value="1"/>
</dbReference>
<dbReference type="HAMAP" id="MF_00389">
    <property type="entry name" value="Thiourid_synth_C"/>
    <property type="match status" value="1"/>
</dbReference>
<dbReference type="InterPro" id="IPR027396">
    <property type="entry name" value="DsrEFH-like"/>
</dbReference>
<dbReference type="InterPro" id="IPR003787">
    <property type="entry name" value="Sulphur_relay_DsrE/F-like"/>
</dbReference>
<dbReference type="InterPro" id="IPR037450">
    <property type="entry name" value="Sulphur_relay_TusC"/>
</dbReference>
<dbReference type="InterPro" id="IPR017462">
    <property type="entry name" value="Sulphur_relay_TusC/DsrF"/>
</dbReference>
<dbReference type="NCBIfam" id="NF001238">
    <property type="entry name" value="PRK00211.1"/>
    <property type="match status" value="1"/>
</dbReference>
<dbReference type="NCBIfam" id="TIGR03010">
    <property type="entry name" value="sulf_tusC_dsrF"/>
    <property type="match status" value="1"/>
</dbReference>
<dbReference type="PANTHER" id="PTHR38780">
    <property type="entry name" value="PROTEIN TUSC"/>
    <property type="match status" value="1"/>
</dbReference>
<dbReference type="PANTHER" id="PTHR38780:SF1">
    <property type="entry name" value="PROTEIN TUSC"/>
    <property type="match status" value="1"/>
</dbReference>
<dbReference type="Pfam" id="PF02635">
    <property type="entry name" value="DsrE"/>
    <property type="match status" value="1"/>
</dbReference>
<dbReference type="SUPFAM" id="SSF75169">
    <property type="entry name" value="DsrEFH-like"/>
    <property type="match status" value="1"/>
</dbReference>
<comment type="function">
    <text evidence="1">Part of a sulfur-relay system required for 2-thiolation of 5-methylaminomethyl-2-thiouridine (mnm(5)s(2)U) at tRNA wobble positions.</text>
</comment>
<comment type="subunit">
    <text evidence="1">Heterohexamer, formed by a dimer of trimers. The hexameric TusBCD complex contains 2 copies each of TusB, TusC and TusD. The TusBCD complex interacts with TusE.</text>
</comment>
<comment type="subcellular location">
    <subcellularLocation>
        <location evidence="1">Cytoplasm</location>
    </subcellularLocation>
</comment>
<comment type="similarity">
    <text evidence="1">Belongs to the DsrF/TusC family.</text>
</comment>
<protein>
    <recommendedName>
        <fullName evidence="1">Protein TusC</fullName>
    </recommendedName>
    <alternativeName>
        <fullName evidence="1">tRNA 2-thiouridine synthesizing protein C</fullName>
    </alternativeName>
</protein>
<evidence type="ECO:0000255" key="1">
    <source>
        <dbReference type="HAMAP-Rule" id="MF_00389"/>
    </source>
</evidence>
<proteinExistence type="inferred from homology"/>
<reference key="1">
    <citation type="journal article" date="2006" name="Mol. Microbiol.">
        <title>Role of pathogenicity island-associated integrases in the genome plasticity of uropathogenic Escherichia coli strain 536.</title>
        <authorList>
            <person name="Hochhut B."/>
            <person name="Wilde C."/>
            <person name="Balling G."/>
            <person name="Middendorf B."/>
            <person name="Dobrindt U."/>
            <person name="Brzuszkiewicz E."/>
            <person name="Gottschalk G."/>
            <person name="Carniel E."/>
            <person name="Hacker J."/>
        </authorList>
    </citation>
    <scope>NUCLEOTIDE SEQUENCE [LARGE SCALE GENOMIC DNA]</scope>
    <source>
        <strain>536 / UPEC</strain>
    </source>
</reference>
<organism>
    <name type="scientific">Escherichia coli O6:K15:H31 (strain 536 / UPEC)</name>
    <dbReference type="NCBI Taxonomy" id="362663"/>
    <lineage>
        <taxon>Bacteria</taxon>
        <taxon>Pseudomonadati</taxon>
        <taxon>Pseudomonadota</taxon>
        <taxon>Gammaproteobacteria</taxon>
        <taxon>Enterobacterales</taxon>
        <taxon>Enterobacteriaceae</taxon>
        <taxon>Escherichia</taxon>
    </lineage>
</organism>
<name>TUSC_ECOL5</name>
<accession>Q0TCB5</accession>
<keyword id="KW-0963">Cytoplasm</keyword>
<keyword id="KW-0819">tRNA processing</keyword>
<feature type="chain" id="PRO_1000013241" description="Protein TusC">
    <location>
        <begin position="1"/>
        <end position="119"/>
    </location>
</feature>
<gene>
    <name evidence="1" type="primary">tusC</name>
    <name type="ordered locus">ECP_3434</name>
</gene>